<name>KHSE_AFIC5</name>
<proteinExistence type="inferred from homology"/>
<sequence>MAVYTDVAADELADFLSGYDLGDLLSYKGIAEGVENSNFLLHTTRGHFFLTLYEKRVAKADLPFFLNLMGHLAARGITCPQPVANRGGETLGTLAGRPAAIIDFLEGVWPRKVSVPHCAAIGEALAKLHLAGADFKMTRANALSVAGWRPLFEAAVARADTVQAGLRDFLATELAHLEANWPQALPRGIIHADLFPDNALFVGDTLSGLIDFYFACNDLLAYDVAICLNAWCFEADHSFNVTKASTFLNAYGKVRPLSEPEQAALPLLARGAALRFLLTRLVDWLNVPPGALVKPKDPLEYVRKLRFHQGVRTIAGYGLARSESVT</sequence>
<protein>
    <recommendedName>
        <fullName evidence="1">Homoserine kinase</fullName>
        <shortName evidence="1">HK</shortName>
        <shortName evidence="1">HSK</shortName>
        <ecNumber evidence="1">2.7.1.39</ecNumber>
    </recommendedName>
</protein>
<feature type="chain" id="PRO_1000115436" description="Homoserine kinase">
    <location>
        <begin position="1"/>
        <end position="326"/>
    </location>
</feature>
<accession>B6JJ40</accession>
<accession>F8BZ19</accession>
<comment type="catalytic activity">
    <reaction evidence="1">
        <text>L-homoserine + ATP = O-phospho-L-homoserine + ADP + H(+)</text>
        <dbReference type="Rhea" id="RHEA:13985"/>
        <dbReference type="ChEBI" id="CHEBI:15378"/>
        <dbReference type="ChEBI" id="CHEBI:30616"/>
        <dbReference type="ChEBI" id="CHEBI:57476"/>
        <dbReference type="ChEBI" id="CHEBI:57590"/>
        <dbReference type="ChEBI" id="CHEBI:456216"/>
        <dbReference type="EC" id="2.7.1.39"/>
    </reaction>
</comment>
<comment type="pathway">
    <text evidence="1">Amino-acid biosynthesis; L-threonine biosynthesis; L-threonine from L-aspartate: step 4/5.</text>
</comment>
<comment type="similarity">
    <text evidence="1">Belongs to the pseudomonas-type ThrB family.</text>
</comment>
<reference key="1">
    <citation type="journal article" date="2008" name="J. Bacteriol.">
        <title>Genome sequence of the chemolithoautotrophic bacterium Oligotropha carboxidovorans OM5T.</title>
        <authorList>
            <person name="Paul D."/>
            <person name="Bridges S."/>
            <person name="Burgess S.C."/>
            <person name="Dandass Y."/>
            <person name="Lawrence M.L."/>
        </authorList>
    </citation>
    <scope>NUCLEOTIDE SEQUENCE [LARGE SCALE GENOMIC DNA]</scope>
    <source>
        <strain>ATCC 49405 / DSM 1227 / KCTC 32145 / OM5</strain>
    </source>
</reference>
<reference key="2">
    <citation type="journal article" date="2011" name="J. Bacteriol.">
        <title>Complete genome sequences of the chemolithoautotrophic Oligotropha carboxidovorans strains OM4 and OM5.</title>
        <authorList>
            <person name="Volland S."/>
            <person name="Rachinger M."/>
            <person name="Strittmatter A."/>
            <person name="Daniel R."/>
            <person name="Gottschalk G."/>
            <person name="Meyer O."/>
        </authorList>
    </citation>
    <scope>NUCLEOTIDE SEQUENCE [LARGE SCALE GENOMIC DNA]</scope>
    <source>
        <strain>ATCC 49405 / DSM 1227 / KCTC 32145 / OM5</strain>
    </source>
</reference>
<gene>
    <name evidence="1" type="primary">thrB</name>
    <name type="ordered locus">OCAR_7330</name>
    <name type="ordered locus">OCA5_c07880</name>
</gene>
<organism>
    <name type="scientific">Afipia carboxidovorans (strain ATCC 49405 / DSM 1227 / KCTC 32145 / OM5)</name>
    <name type="common">Oligotropha carboxidovorans</name>
    <dbReference type="NCBI Taxonomy" id="504832"/>
    <lineage>
        <taxon>Bacteria</taxon>
        <taxon>Pseudomonadati</taxon>
        <taxon>Pseudomonadota</taxon>
        <taxon>Alphaproteobacteria</taxon>
        <taxon>Hyphomicrobiales</taxon>
        <taxon>Nitrobacteraceae</taxon>
        <taxon>Afipia</taxon>
    </lineage>
</organism>
<dbReference type="EC" id="2.7.1.39" evidence="1"/>
<dbReference type="EMBL" id="CP001196">
    <property type="protein sequence ID" value="ACI94434.1"/>
    <property type="molecule type" value="Genomic_DNA"/>
</dbReference>
<dbReference type="EMBL" id="CP002826">
    <property type="protein sequence ID" value="AEI05510.1"/>
    <property type="molecule type" value="Genomic_DNA"/>
</dbReference>
<dbReference type="RefSeq" id="WP_012564460.1">
    <property type="nucleotide sequence ID" value="NC_015684.1"/>
</dbReference>
<dbReference type="SMR" id="B6JJ40"/>
<dbReference type="STRING" id="504832.OCA5_c07880"/>
<dbReference type="KEGG" id="oca:OCAR_7330"/>
<dbReference type="KEGG" id="ocg:OCA5_c07880"/>
<dbReference type="PATRIC" id="fig|504832.7.peg.833"/>
<dbReference type="eggNOG" id="COG2334">
    <property type="taxonomic scope" value="Bacteria"/>
</dbReference>
<dbReference type="HOGENOM" id="CLU_053300_1_0_5"/>
<dbReference type="OrthoDB" id="9777460at2"/>
<dbReference type="UniPathway" id="UPA00050">
    <property type="reaction ID" value="UER00064"/>
</dbReference>
<dbReference type="Proteomes" id="UP000007730">
    <property type="component" value="Chromosome"/>
</dbReference>
<dbReference type="GO" id="GO:0005524">
    <property type="term" value="F:ATP binding"/>
    <property type="evidence" value="ECO:0007669"/>
    <property type="project" value="UniProtKB-KW"/>
</dbReference>
<dbReference type="GO" id="GO:0004413">
    <property type="term" value="F:homoserine kinase activity"/>
    <property type="evidence" value="ECO:0007669"/>
    <property type="project" value="UniProtKB-UniRule"/>
</dbReference>
<dbReference type="GO" id="GO:0009088">
    <property type="term" value="P:threonine biosynthetic process"/>
    <property type="evidence" value="ECO:0007669"/>
    <property type="project" value="UniProtKB-UniRule"/>
</dbReference>
<dbReference type="CDD" id="cd05153">
    <property type="entry name" value="HomoserineK_II"/>
    <property type="match status" value="1"/>
</dbReference>
<dbReference type="Gene3D" id="3.90.1200.10">
    <property type="match status" value="1"/>
</dbReference>
<dbReference type="Gene3D" id="3.30.200.20">
    <property type="entry name" value="Phosphorylase Kinase, domain 1"/>
    <property type="match status" value="1"/>
</dbReference>
<dbReference type="HAMAP" id="MF_00301">
    <property type="entry name" value="Homoser_kinase_2"/>
    <property type="match status" value="1"/>
</dbReference>
<dbReference type="InterPro" id="IPR002575">
    <property type="entry name" value="Aminoglycoside_PTrfase"/>
</dbReference>
<dbReference type="InterPro" id="IPR005280">
    <property type="entry name" value="Homoserine_kinase_II"/>
</dbReference>
<dbReference type="InterPro" id="IPR011009">
    <property type="entry name" value="Kinase-like_dom_sf"/>
</dbReference>
<dbReference type="InterPro" id="IPR050249">
    <property type="entry name" value="Pseudomonas-type_ThrB"/>
</dbReference>
<dbReference type="NCBIfam" id="NF003558">
    <property type="entry name" value="PRK05231.1"/>
    <property type="match status" value="1"/>
</dbReference>
<dbReference type="NCBIfam" id="TIGR00938">
    <property type="entry name" value="thrB_alt"/>
    <property type="match status" value="1"/>
</dbReference>
<dbReference type="PANTHER" id="PTHR21064:SF6">
    <property type="entry name" value="AMINOGLYCOSIDE PHOSPHOTRANSFERASE DOMAIN-CONTAINING PROTEIN"/>
    <property type="match status" value="1"/>
</dbReference>
<dbReference type="PANTHER" id="PTHR21064">
    <property type="entry name" value="AMINOGLYCOSIDE PHOSPHOTRANSFERASE DOMAIN-CONTAINING PROTEIN-RELATED"/>
    <property type="match status" value="1"/>
</dbReference>
<dbReference type="Pfam" id="PF01636">
    <property type="entry name" value="APH"/>
    <property type="match status" value="1"/>
</dbReference>
<dbReference type="SUPFAM" id="SSF56112">
    <property type="entry name" value="Protein kinase-like (PK-like)"/>
    <property type="match status" value="1"/>
</dbReference>
<evidence type="ECO:0000255" key="1">
    <source>
        <dbReference type="HAMAP-Rule" id="MF_00301"/>
    </source>
</evidence>
<keyword id="KW-0028">Amino-acid biosynthesis</keyword>
<keyword id="KW-0067">ATP-binding</keyword>
<keyword id="KW-0418">Kinase</keyword>
<keyword id="KW-0547">Nucleotide-binding</keyword>
<keyword id="KW-1185">Reference proteome</keyword>
<keyword id="KW-0791">Threonine biosynthesis</keyword>
<keyword id="KW-0808">Transferase</keyword>